<evidence type="ECO:0000255" key="1">
    <source>
        <dbReference type="PROSITE-ProRule" id="PRU01128"/>
    </source>
</evidence>
<evidence type="ECO:0000305" key="2"/>
<accession>Q9FN32</accession>
<gene>
    <name type="ordered locus">At5g53940</name>
    <name type="ORF">K19P17.11</name>
</gene>
<sequence length="129" mass="14808">MGRIFTVELEGRSYRCRFCRTHLALPDDLVSRSFHCRRGKAYLFNRSVNISMGPLEERLMLSGMHTVADIFCCCCGQNVGWKYESAHEKAQKYKEGKFVLERGRIVDEIDLSTEVYIDTHGSTSDTEDS</sequence>
<organism>
    <name type="scientific">Arabidopsis thaliana</name>
    <name type="common">Mouse-ear cress</name>
    <dbReference type="NCBI Taxonomy" id="3702"/>
    <lineage>
        <taxon>Eukaryota</taxon>
        <taxon>Viridiplantae</taxon>
        <taxon>Streptophyta</taxon>
        <taxon>Embryophyta</taxon>
        <taxon>Tracheophyta</taxon>
        <taxon>Spermatophyta</taxon>
        <taxon>Magnoliopsida</taxon>
        <taxon>eudicotyledons</taxon>
        <taxon>Gunneridae</taxon>
        <taxon>Pentapetalae</taxon>
        <taxon>rosids</taxon>
        <taxon>malvids</taxon>
        <taxon>Brassicales</taxon>
        <taxon>Brassicaceae</taxon>
        <taxon>Camelineae</taxon>
        <taxon>Arabidopsis</taxon>
    </lineage>
</organism>
<comment type="similarity">
    <text evidence="2">Belongs to the yippee family.</text>
</comment>
<reference key="1">
    <citation type="journal article" date="1997" name="DNA Res.">
        <title>Structural analysis of Arabidopsis thaliana chromosome 5. III. Sequence features of the regions of 1,191,918 bp covered by seventeen physically assigned P1 clones.</title>
        <authorList>
            <person name="Nakamura Y."/>
            <person name="Sato S."/>
            <person name="Kaneko T."/>
            <person name="Kotani H."/>
            <person name="Asamizu E."/>
            <person name="Miyajima N."/>
            <person name="Tabata S."/>
        </authorList>
    </citation>
    <scope>NUCLEOTIDE SEQUENCE [LARGE SCALE GENOMIC DNA]</scope>
    <source>
        <strain>cv. Columbia</strain>
    </source>
</reference>
<reference key="2">
    <citation type="journal article" date="2017" name="Plant J.">
        <title>Araport11: a complete reannotation of the Arabidopsis thaliana reference genome.</title>
        <authorList>
            <person name="Cheng C.Y."/>
            <person name="Krishnakumar V."/>
            <person name="Chan A.P."/>
            <person name="Thibaud-Nissen F."/>
            <person name="Schobel S."/>
            <person name="Town C.D."/>
        </authorList>
    </citation>
    <scope>GENOME REANNOTATION</scope>
    <source>
        <strain>cv. Columbia</strain>
    </source>
</reference>
<reference key="3">
    <citation type="submission" date="2002-03" db="EMBL/GenBank/DDBJ databases">
        <title>Full-length cDNA from Arabidopsis thaliana.</title>
        <authorList>
            <person name="Brover V.V."/>
            <person name="Troukhan M.E."/>
            <person name="Alexandrov N.A."/>
            <person name="Lu Y.-P."/>
            <person name="Flavell R.B."/>
            <person name="Feldmann K.A."/>
        </authorList>
    </citation>
    <scope>NUCLEOTIDE SEQUENCE [LARGE SCALE MRNA]</scope>
</reference>
<feature type="chain" id="PRO_0000212406" description="Protein yippee-like At5g53940">
    <location>
        <begin position="1"/>
        <end position="129"/>
    </location>
</feature>
<feature type="domain" description="Yippee" evidence="1">
    <location>
        <begin position="12"/>
        <end position="109"/>
    </location>
</feature>
<feature type="binding site" evidence="1">
    <location>
        <position position="16"/>
    </location>
    <ligand>
        <name>Zn(2+)</name>
        <dbReference type="ChEBI" id="CHEBI:29105"/>
    </ligand>
</feature>
<feature type="binding site" evidence="1">
    <location>
        <position position="19"/>
    </location>
    <ligand>
        <name>Zn(2+)</name>
        <dbReference type="ChEBI" id="CHEBI:29105"/>
    </ligand>
</feature>
<feature type="binding site" evidence="1">
    <location>
        <position position="72"/>
    </location>
    <ligand>
        <name>Zn(2+)</name>
        <dbReference type="ChEBI" id="CHEBI:29105"/>
    </ligand>
</feature>
<feature type="binding site" evidence="1">
    <location>
        <position position="75"/>
    </location>
    <ligand>
        <name>Zn(2+)</name>
        <dbReference type="ChEBI" id="CHEBI:29105"/>
    </ligand>
</feature>
<dbReference type="EMBL" id="AB007644">
    <property type="protein sequence ID" value="BAB10724.1"/>
    <property type="molecule type" value="Genomic_DNA"/>
</dbReference>
<dbReference type="EMBL" id="CP002688">
    <property type="protein sequence ID" value="AED96431.1"/>
    <property type="molecule type" value="Genomic_DNA"/>
</dbReference>
<dbReference type="EMBL" id="AY086122">
    <property type="protein sequence ID" value="AAM63328.1"/>
    <property type="molecule type" value="mRNA"/>
</dbReference>
<dbReference type="RefSeq" id="NP_200205.1">
    <property type="nucleotide sequence ID" value="NM_124773.3"/>
</dbReference>
<dbReference type="SMR" id="Q9FN32"/>
<dbReference type="FunCoup" id="Q9FN32">
    <property type="interactions" value="312"/>
</dbReference>
<dbReference type="STRING" id="3702.Q9FN32"/>
<dbReference type="PaxDb" id="3702-AT5G53940.1"/>
<dbReference type="ProteomicsDB" id="242343"/>
<dbReference type="EnsemblPlants" id="AT5G53940.1">
    <property type="protein sequence ID" value="AT5G53940.1"/>
    <property type="gene ID" value="AT5G53940"/>
</dbReference>
<dbReference type="GeneID" id="835477"/>
<dbReference type="Gramene" id="AT5G53940.1">
    <property type="protein sequence ID" value="AT5G53940.1"/>
    <property type="gene ID" value="AT5G53940"/>
</dbReference>
<dbReference type="KEGG" id="ath:AT5G53940"/>
<dbReference type="Araport" id="AT5G53940"/>
<dbReference type="TAIR" id="AT5G53940"/>
<dbReference type="eggNOG" id="KOG3399">
    <property type="taxonomic scope" value="Eukaryota"/>
</dbReference>
<dbReference type="HOGENOM" id="CLU_043857_1_1_1"/>
<dbReference type="InParanoid" id="Q9FN32"/>
<dbReference type="OMA" id="CCCGQII"/>
<dbReference type="OrthoDB" id="6407410at2759"/>
<dbReference type="PhylomeDB" id="Q9FN32"/>
<dbReference type="PRO" id="PR:Q9FN32"/>
<dbReference type="Proteomes" id="UP000006548">
    <property type="component" value="Chromosome 5"/>
</dbReference>
<dbReference type="ExpressionAtlas" id="Q9FN32">
    <property type="expression patterns" value="baseline and differential"/>
</dbReference>
<dbReference type="GO" id="GO:0046872">
    <property type="term" value="F:metal ion binding"/>
    <property type="evidence" value="ECO:0007669"/>
    <property type="project" value="UniProtKB-KW"/>
</dbReference>
<dbReference type="InterPro" id="IPR034751">
    <property type="entry name" value="Yippee"/>
</dbReference>
<dbReference type="InterPro" id="IPR004910">
    <property type="entry name" value="Yippee/Mis18/Cereblon"/>
</dbReference>
<dbReference type="InterPro" id="IPR039058">
    <property type="entry name" value="Yippee_fam"/>
</dbReference>
<dbReference type="PANTHER" id="PTHR13848">
    <property type="entry name" value="PROTEIN YIPPEE-LIKE CG15309-RELATED"/>
    <property type="match status" value="1"/>
</dbReference>
<dbReference type="Pfam" id="PF03226">
    <property type="entry name" value="Yippee-Mis18"/>
    <property type="match status" value="1"/>
</dbReference>
<dbReference type="PROSITE" id="PS51792">
    <property type="entry name" value="YIPPEE"/>
    <property type="match status" value="1"/>
</dbReference>
<name>YIPL7_ARATH</name>
<proteinExistence type="evidence at transcript level"/>
<protein>
    <recommendedName>
        <fullName>Protein yippee-like At5g53940</fullName>
    </recommendedName>
</protein>
<keyword id="KW-0479">Metal-binding</keyword>
<keyword id="KW-1185">Reference proteome</keyword>
<keyword id="KW-0862">Zinc</keyword>